<comment type="function">
    <text evidence="1">Catalyzes the oxidation of 5,10-methylenetetrahydrofolate to 5,10-methenyltetrahydrofolate and then the hydrolysis of 5,10-methenyltetrahydrofolate to 10-formyltetrahydrofolate.</text>
</comment>
<comment type="catalytic activity">
    <reaction evidence="1">
        <text>(6R)-5,10-methylene-5,6,7,8-tetrahydrofolate + NADP(+) = (6R)-5,10-methenyltetrahydrofolate + NADPH</text>
        <dbReference type="Rhea" id="RHEA:22812"/>
        <dbReference type="ChEBI" id="CHEBI:15636"/>
        <dbReference type="ChEBI" id="CHEBI:57455"/>
        <dbReference type="ChEBI" id="CHEBI:57783"/>
        <dbReference type="ChEBI" id="CHEBI:58349"/>
        <dbReference type="EC" id="1.5.1.5"/>
    </reaction>
</comment>
<comment type="catalytic activity">
    <reaction evidence="1">
        <text>(6R)-5,10-methenyltetrahydrofolate + H2O = (6R)-10-formyltetrahydrofolate + H(+)</text>
        <dbReference type="Rhea" id="RHEA:23700"/>
        <dbReference type="ChEBI" id="CHEBI:15377"/>
        <dbReference type="ChEBI" id="CHEBI:15378"/>
        <dbReference type="ChEBI" id="CHEBI:57455"/>
        <dbReference type="ChEBI" id="CHEBI:195366"/>
        <dbReference type="EC" id="3.5.4.9"/>
    </reaction>
</comment>
<comment type="pathway">
    <text evidence="1">One-carbon metabolism; tetrahydrofolate interconversion.</text>
</comment>
<comment type="subunit">
    <text evidence="1">Homodimer.</text>
</comment>
<comment type="similarity">
    <text evidence="1">Belongs to the tetrahydrofolate dehydrogenase/cyclohydrolase family.</text>
</comment>
<feature type="chain" id="PRO_1000147535" description="Bifunctional protein FolD">
    <location>
        <begin position="1"/>
        <end position="315"/>
    </location>
</feature>
<feature type="binding site" evidence="1">
    <location>
        <begin position="166"/>
        <end position="168"/>
    </location>
    <ligand>
        <name>NADP(+)</name>
        <dbReference type="ChEBI" id="CHEBI:58349"/>
    </ligand>
</feature>
<feature type="binding site" evidence="1">
    <location>
        <position position="193"/>
    </location>
    <ligand>
        <name>NADP(+)</name>
        <dbReference type="ChEBI" id="CHEBI:58349"/>
    </ligand>
</feature>
<feature type="binding site" evidence="1">
    <location>
        <position position="234"/>
    </location>
    <ligand>
        <name>NADP(+)</name>
        <dbReference type="ChEBI" id="CHEBI:58349"/>
    </ligand>
</feature>
<protein>
    <recommendedName>
        <fullName evidence="1">Bifunctional protein FolD</fullName>
    </recommendedName>
    <domain>
        <recommendedName>
            <fullName evidence="1">Methylenetetrahydrofolate dehydrogenase</fullName>
            <ecNumber evidence="1">1.5.1.5</ecNumber>
        </recommendedName>
    </domain>
    <domain>
        <recommendedName>
            <fullName evidence="1">Methenyltetrahydrofolate cyclohydrolase</fullName>
            <ecNumber evidence="1">3.5.4.9</ecNumber>
        </recommendedName>
    </domain>
</protein>
<accession>B2S3X1</accession>
<organism>
    <name type="scientific">Treponema pallidum subsp. pallidum (strain SS14)</name>
    <dbReference type="NCBI Taxonomy" id="455434"/>
    <lineage>
        <taxon>Bacteria</taxon>
        <taxon>Pseudomonadati</taxon>
        <taxon>Spirochaetota</taxon>
        <taxon>Spirochaetia</taxon>
        <taxon>Spirochaetales</taxon>
        <taxon>Treponemataceae</taxon>
        <taxon>Treponema</taxon>
    </lineage>
</organism>
<gene>
    <name evidence="1" type="primary">folD</name>
    <name type="ordered locus">TPASS_0732</name>
</gene>
<sequence length="315" mass="32819">MDARLIDGKQAAHECTARLATRVQALRAAVGTAPFLAAVLVGDDPASCTYVAAKQRALARAHLRGETHRLPAHASHAQVLELIARLNEDARVHGILIQLPLPAHLDAARVCRAVAPEKDVDGFHPLNCGALFLAQPGFVPCTPAGIVHLLRRAQVPLAGARVVIVGRSAIVGRPLAVLLASPGCDATVTLCHSHTRGLADICVQADILVAALGKARFIGAPFVRTGAVVIDVGIHHVPDATAPRGRRLCGDVDFDAVAHKVQAITPVPGGVGPMTIAMLLHNTLCAAEYAAGMIPPFRAALYADLDGRAAGDVPH</sequence>
<keyword id="KW-0028">Amino-acid biosynthesis</keyword>
<keyword id="KW-0368">Histidine biosynthesis</keyword>
<keyword id="KW-0378">Hydrolase</keyword>
<keyword id="KW-0486">Methionine biosynthesis</keyword>
<keyword id="KW-0511">Multifunctional enzyme</keyword>
<keyword id="KW-0521">NADP</keyword>
<keyword id="KW-0554">One-carbon metabolism</keyword>
<keyword id="KW-0560">Oxidoreductase</keyword>
<keyword id="KW-0658">Purine biosynthesis</keyword>
<evidence type="ECO:0000255" key="1">
    <source>
        <dbReference type="HAMAP-Rule" id="MF_01576"/>
    </source>
</evidence>
<dbReference type="EC" id="1.5.1.5" evidence="1"/>
<dbReference type="EC" id="3.5.4.9" evidence="1"/>
<dbReference type="EMBL" id="CP000805">
    <property type="protein sequence ID" value="ACD71150.1"/>
    <property type="molecule type" value="Genomic_DNA"/>
</dbReference>
<dbReference type="RefSeq" id="WP_010882177.1">
    <property type="nucleotide sequence ID" value="NC_021508.1"/>
</dbReference>
<dbReference type="SMR" id="B2S3X1"/>
<dbReference type="KEGG" id="tpp:TPASS_0732"/>
<dbReference type="PATRIC" id="fig|455434.6.peg.722"/>
<dbReference type="UniPathway" id="UPA00193"/>
<dbReference type="Proteomes" id="UP000001202">
    <property type="component" value="Chromosome"/>
</dbReference>
<dbReference type="GO" id="GO:0005829">
    <property type="term" value="C:cytosol"/>
    <property type="evidence" value="ECO:0007669"/>
    <property type="project" value="TreeGrafter"/>
</dbReference>
<dbReference type="GO" id="GO:0004477">
    <property type="term" value="F:methenyltetrahydrofolate cyclohydrolase activity"/>
    <property type="evidence" value="ECO:0007669"/>
    <property type="project" value="UniProtKB-UniRule"/>
</dbReference>
<dbReference type="GO" id="GO:0004488">
    <property type="term" value="F:methylenetetrahydrofolate dehydrogenase (NADP+) activity"/>
    <property type="evidence" value="ECO:0007669"/>
    <property type="project" value="UniProtKB-UniRule"/>
</dbReference>
<dbReference type="GO" id="GO:0000105">
    <property type="term" value="P:L-histidine biosynthetic process"/>
    <property type="evidence" value="ECO:0007669"/>
    <property type="project" value="UniProtKB-KW"/>
</dbReference>
<dbReference type="GO" id="GO:0009086">
    <property type="term" value="P:methionine biosynthetic process"/>
    <property type="evidence" value="ECO:0007669"/>
    <property type="project" value="UniProtKB-KW"/>
</dbReference>
<dbReference type="GO" id="GO:0006164">
    <property type="term" value="P:purine nucleotide biosynthetic process"/>
    <property type="evidence" value="ECO:0007669"/>
    <property type="project" value="UniProtKB-KW"/>
</dbReference>
<dbReference type="GO" id="GO:0035999">
    <property type="term" value="P:tetrahydrofolate interconversion"/>
    <property type="evidence" value="ECO:0007669"/>
    <property type="project" value="UniProtKB-UniRule"/>
</dbReference>
<dbReference type="CDD" id="cd01080">
    <property type="entry name" value="NAD_bind_m-THF_DH_Cyclohyd"/>
    <property type="match status" value="1"/>
</dbReference>
<dbReference type="FunFam" id="3.40.50.720:FF:000006">
    <property type="entry name" value="Bifunctional protein FolD"/>
    <property type="match status" value="1"/>
</dbReference>
<dbReference type="FunFam" id="3.40.50.10860:FF:000005">
    <property type="entry name" value="C-1-tetrahydrofolate synthase, cytoplasmic, putative"/>
    <property type="match status" value="1"/>
</dbReference>
<dbReference type="Gene3D" id="3.40.50.10860">
    <property type="entry name" value="Leucine Dehydrogenase, chain A, domain 1"/>
    <property type="match status" value="1"/>
</dbReference>
<dbReference type="Gene3D" id="3.40.50.720">
    <property type="entry name" value="NAD(P)-binding Rossmann-like Domain"/>
    <property type="match status" value="1"/>
</dbReference>
<dbReference type="HAMAP" id="MF_01576">
    <property type="entry name" value="THF_DHG_CYH"/>
    <property type="match status" value="1"/>
</dbReference>
<dbReference type="InterPro" id="IPR046346">
    <property type="entry name" value="Aminoacid_DH-like_N_sf"/>
</dbReference>
<dbReference type="InterPro" id="IPR036291">
    <property type="entry name" value="NAD(P)-bd_dom_sf"/>
</dbReference>
<dbReference type="InterPro" id="IPR000672">
    <property type="entry name" value="THF_DH/CycHdrlase"/>
</dbReference>
<dbReference type="InterPro" id="IPR020630">
    <property type="entry name" value="THF_DH/CycHdrlase_cat_dom"/>
</dbReference>
<dbReference type="InterPro" id="IPR020867">
    <property type="entry name" value="THF_DH/CycHdrlase_CS"/>
</dbReference>
<dbReference type="InterPro" id="IPR020631">
    <property type="entry name" value="THF_DH/CycHdrlase_NAD-bd_dom"/>
</dbReference>
<dbReference type="PANTHER" id="PTHR48099:SF5">
    <property type="entry name" value="C-1-TETRAHYDROFOLATE SYNTHASE, CYTOPLASMIC"/>
    <property type="match status" value="1"/>
</dbReference>
<dbReference type="PANTHER" id="PTHR48099">
    <property type="entry name" value="C-1-TETRAHYDROFOLATE SYNTHASE, CYTOPLASMIC-RELATED"/>
    <property type="match status" value="1"/>
</dbReference>
<dbReference type="Pfam" id="PF00763">
    <property type="entry name" value="THF_DHG_CYH"/>
    <property type="match status" value="1"/>
</dbReference>
<dbReference type="Pfam" id="PF02882">
    <property type="entry name" value="THF_DHG_CYH_C"/>
    <property type="match status" value="1"/>
</dbReference>
<dbReference type="PRINTS" id="PR00085">
    <property type="entry name" value="THFDHDRGNASE"/>
</dbReference>
<dbReference type="SUPFAM" id="SSF53223">
    <property type="entry name" value="Aminoacid dehydrogenase-like, N-terminal domain"/>
    <property type="match status" value="1"/>
</dbReference>
<dbReference type="SUPFAM" id="SSF51735">
    <property type="entry name" value="NAD(P)-binding Rossmann-fold domains"/>
    <property type="match status" value="1"/>
</dbReference>
<dbReference type="PROSITE" id="PS00767">
    <property type="entry name" value="THF_DHG_CYH_2"/>
    <property type="match status" value="1"/>
</dbReference>
<proteinExistence type="inferred from homology"/>
<name>FOLD_TREPS</name>
<reference key="1">
    <citation type="journal article" date="2008" name="BMC Microbiol.">
        <title>Complete genome sequence of Treponema pallidum ssp. pallidum strain SS14 determined with oligonucleotide arrays.</title>
        <authorList>
            <person name="Matejkova P."/>
            <person name="Strouhal M."/>
            <person name="Smajs D."/>
            <person name="Norris S.J."/>
            <person name="Palzkill T."/>
            <person name="Petrosino J.F."/>
            <person name="Sodergren E."/>
            <person name="Norton J.E."/>
            <person name="Singh J."/>
            <person name="Richmond T.A."/>
            <person name="Molla M.N."/>
            <person name="Albert T.J."/>
            <person name="Weinstock G.M."/>
        </authorList>
    </citation>
    <scope>NUCLEOTIDE SEQUENCE [LARGE SCALE GENOMIC DNA]</scope>
    <source>
        <strain>SS14</strain>
    </source>
</reference>